<evidence type="ECO:0000250" key="1"/>
<evidence type="ECO:0000256" key="2">
    <source>
        <dbReference type="SAM" id="MobiDB-lite"/>
    </source>
</evidence>
<comment type="function">
    <text evidence="1">Regulates HCFC1 activity by modulating its subcellular localization. Overexpression of HCFC1R1 leads to accumulation of HCFC1 in the cytoplasm. HCFC1R1-mediated export may provide the pool of cytoplasmic HCFC1 required for import of virion-derived VP16 into the nucleus (By similarity).</text>
</comment>
<comment type="subunit">
    <text evidence="1">Interacts with HCFC1.</text>
</comment>
<comment type="subcellular location">
    <subcellularLocation>
        <location evidence="1">Cytoplasm</location>
    </subcellularLocation>
    <subcellularLocation>
        <location evidence="1">Nucleus</location>
    </subcellularLocation>
    <text evidence="1">Shuttles between the nucleus and cytoplasm in a CRM1-dependent manner.</text>
</comment>
<reference key="1">
    <citation type="submission" date="2005-07" db="EMBL/GenBank/DDBJ databases">
        <authorList>
            <person name="Mural R.J."/>
            <person name="Adams M.D."/>
            <person name="Myers E.W."/>
            <person name="Smith H.O."/>
            <person name="Venter J.C."/>
        </authorList>
    </citation>
    <scope>NUCLEOTIDE SEQUENCE [LARGE SCALE GENOMIC DNA]</scope>
    <source>
        <strain>Brown Norway</strain>
    </source>
</reference>
<reference key="2">
    <citation type="submission" date="2003-02" db="EMBL/GenBank/DDBJ databases">
        <title>Functional cloning of neuronal genes that inhibit herpes simplex virus type 1 IE3 promoter activity.</title>
        <authorList>
            <person name="Ellison A.R."/>
            <person name="Yang L."/>
            <person name="Bodeker M."/>
            <person name="Matthews P."/>
            <person name="Pakpour N."/>
            <person name="Margolis T.P."/>
        </authorList>
    </citation>
    <scope>NUCLEOTIDE SEQUENCE [MRNA] OF 6-116</scope>
    <source>
        <strain>Sprague-Dawley</strain>
        <tissue>Sensory ganglion</tissue>
    </source>
</reference>
<organism>
    <name type="scientific">Rattus norvegicus</name>
    <name type="common">Rat</name>
    <dbReference type="NCBI Taxonomy" id="10116"/>
    <lineage>
        <taxon>Eukaryota</taxon>
        <taxon>Metazoa</taxon>
        <taxon>Chordata</taxon>
        <taxon>Craniata</taxon>
        <taxon>Vertebrata</taxon>
        <taxon>Euteleostomi</taxon>
        <taxon>Mammalia</taxon>
        <taxon>Eutheria</taxon>
        <taxon>Euarchontoglires</taxon>
        <taxon>Glires</taxon>
        <taxon>Rodentia</taxon>
        <taxon>Myomorpha</taxon>
        <taxon>Muroidea</taxon>
        <taxon>Muridae</taxon>
        <taxon>Murinae</taxon>
        <taxon>Rattus</taxon>
    </lineage>
</organism>
<sequence>MILQQPLERGPPGRDPRATTGVTLGLDTREPLHKHFLSEENMATHFSRLSLHNDHPYCSPPVTFPEALPPLRSPCPELLLWRYPGSLIPEALRLLRLGDNPSPYYSASPAGEIMEL</sequence>
<name>HPIP_RAT</name>
<feature type="chain" id="PRO_0000338980" description="Host cell factor C1 regulator 1">
    <location>
        <begin position="1"/>
        <end position="116"/>
    </location>
</feature>
<feature type="region of interest" description="Disordered" evidence="2">
    <location>
        <begin position="1"/>
        <end position="22"/>
    </location>
</feature>
<feature type="region of interest" description="Interaction with HCFC1" evidence="1">
    <location>
        <begin position="54"/>
        <end position="57"/>
    </location>
</feature>
<feature type="short sequence motif" description="Nuclear export signal" evidence="1">
    <location>
        <begin position="88"/>
        <end position="97"/>
    </location>
</feature>
<gene>
    <name type="primary">Hcfc1r1</name>
    <name type="synonym">Hpip</name>
</gene>
<dbReference type="EMBL" id="CH473948">
    <property type="protein sequence ID" value="EDM03759.1"/>
    <property type="molecule type" value="Genomic_DNA"/>
</dbReference>
<dbReference type="EMBL" id="AY245001">
    <property type="protein sequence ID" value="AAO92641.1"/>
    <property type="molecule type" value="mRNA"/>
</dbReference>
<dbReference type="RefSeq" id="NP_001093962.1">
    <property type="nucleotide sequence ID" value="NM_001100492.1"/>
</dbReference>
<dbReference type="RefSeq" id="NP_001171976.1">
    <property type="nucleotide sequence ID" value="NM_001185047.1"/>
</dbReference>
<dbReference type="RefSeq" id="XP_038941274.1">
    <property type="nucleotide sequence ID" value="XM_039085346.2"/>
</dbReference>
<dbReference type="FunCoup" id="Q80V38">
    <property type="interactions" value="37"/>
</dbReference>
<dbReference type="STRING" id="10116.ENSRNOP00000004702"/>
<dbReference type="PhosphoSitePlus" id="Q80V38"/>
<dbReference type="PaxDb" id="10116-ENSRNOP00000004702"/>
<dbReference type="GeneID" id="287097"/>
<dbReference type="KEGG" id="rno:287097"/>
<dbReference type="UCSC" id="RGD:727975">
    <property type="organism name" value="rat"/>
</dbReference>
<dbReference type="AGR" id="RGD:727975"/>
<dbReference type="CTD" id="54985"/>
<dbReference type="RGD" id="727975">
    <property type="gene designation" value="Hcfc1r1"/>
</dbReference>
<dbReference type="eggNOG" id="ENOG502SWHU">
    <property type="taxonomic scope" value="Eukaryota"/>
</dbReference>
<dbReference type="InParanoid" id="Q80V38"/>
<dbReference type="PRO" id="PR:Q80V38"/>
<dbReference type="Proteomes" id="UP000002494">
    <property type="component" value="Unplaced"/>
</dbReference>
<dbReference type="Proteomes" id="UP000234681">
    <property type="component" value="Chromosome 10"/>
</dbReference>
<dbReference type="GO" id="GO:0005737">
    <property type="term" value="C:cytoplasm"/>
    <property type="evidence" value="ECO:0007669"/>
    <property type="project" value="UniProtKB-SubCell"/>
</dbReference>
<dbReference type="GO" id="GO:0005634">
    <property type="term" value="C:nucleus"/>
    <property type="evidence" value="ECO:0007669"/>
    <property type="project" value="UniProtKB-SubCell"/>
</dbReference>
<dbReference type="InterPro" id="IPR029195">
    <property type="entry name" value="HCFC1R1"/>
</dbReference>
<dbReference type="PANTHER" id="PTHR16246">
    <property type="entry name" value="HOST CELL FACTOR C1 REGULATOR 1"/>
    <property type="match status" value="1"/>
</dbReference>
<dbReference type="PANTHER" id="PTHR16246:SF2">
    <property type="entry name" value="HOST CELL FACTOR C1 REGULATOR 1"/>
    <property type="match status" value="1"/>
</dbReference>
<dbReference type="Pfam" id="PF15226">
    <property type="entry name" value="HPIP"/>
    <property type="match status" value="1"/>
</dbReference>
<keyword id="KW-0963">Cytoplasm</keyword>
<keyword id="KW-0539">Nucleus</keyword>
<keyword id="KW-1185">Reference proteome</keyword>
<protein>
    <recommendedName>
        <fullName>Host cell factor C1 regulator 1</fullName>
    </recommendedName>
    <alternativeName>
        <fullName>HCF-1 beta-propeller-interacting protein</fullName>
    </alternativeName>
    <alternativeName>
        <fullName>Inhibitor of four 2</fullName>
    </alternativeName>
</protein>
<accession>Q80V38</accession>
<proteinExistence type="inferred from homology"/>